<dbReference type="EC" id="3.1.4.35" evidence="9"/>
<dbReference type="EMBL" id="AF031147">
    <property type="protein sequence ID" value="AAC24344.1"/>
    <property type="molecule type" value="mRNA"/>
</dbReference>
<dbReference type="EMBL" id="AF068247">
    <property type="protein sequence ID" value="AAC23996.1"/>
    <property type="molecule type" value="mRNA"/>
</dbReference>
<dbReference type="EMBL" id="BC061163">
    <property type="protein sequence ID" value="AAH61163.1"/>
    <property type="molecule type" value="mRNA"/>
</dbReference>
<dbReference type="CCDS" id="CCDS28605.1">
    <molecule id="O70628-1"/>
</dbReference>
<dbReference type="RefSeq" id="NP_001157220.1">
    <molecule id="O70628-1"/>
    <property type="nucleotide sequence ID" value="NM_001163748.2"/>
</dbReference>
<dbReference type="RefSeq" id="NP_032830.3">
    <molecule id="O70628-1"/>
    <property type="nucleotide sequence ID" value="NM_008804.4"/>
</dbReference>
<dbReference type="SMR" id="O70628"/>
<dbReference type="BioGRID" id="202083">
    <property type="interactions" value="1"/>
</dbReference>
<dbReference type="FunCoup" id="O70628">
    <property type="interactions" value="170"/>
</dbReference>
<dbReference type="STRING" id="10090.ENSMUSP00000038005"/>
<dbReference type="BindingDB" id="O70628"/>
<dbReference type="ChEMBL" id="CHEMBL5169102"/>
<dbReference type="iPTMnet" id="O70628"/>
<dbReference type="PhosphoSitePlus" id="O70628"/>
<dbReference type="PaxDb" id="10090-ENSMUSP00000038005"/>
<dbReference type="ProteomicsDB" id="287991">
    <molecule id="O70628-1"/>
</dbReference>
<dbReference type="Antibodypedia" id="1648">
    <property type="antibodies" value="226 antibodies from 32 providers"/>
</dbReference>
<dbReference type="DNASU" id="18585"/>
<dbReference type="Ensembl" id="ENSMUST00000047168.13">
    <molecule id="O70628-1"/>
    <property type="protein sequence ID" value="ENSMUSP00000038005.6"/>
    <property type="gene ID" value="ENSMUSG00000041119.13"/>
</dbReference>
<dbReference type="Ensembl" id="ENSMUST00000127929.8">
    <molecule id="O70628-1"/>
    <property type="protein sequence ID" value="ENSMUSP00000117611.2"/>
    <property type="gene ID" value="ENSMUSG00000041119.13"/>
</dbReference>
<dbReference type="GeneID" id="18585"/>
<dbReference type="KEGG" id="mmu:18585"/>
<dbReference type="UCSC" id="uc008buz.2">
    <molecule id="O70628-1"/>
    <property type="organism name" value="mouse"/>
</dbReference>
<dbReference type="AGR" id="MGI:1277179"/>
<dbReference type="CTD" id="5152"/>
<dbReference type="MGI" id="MGI:1277179">
    <property type="gene designation" value="Pde9a"/>
</dbReference>
<dbReference type="VEuPathDB" id="HostDB:ENSMUSG00000041119"/>
<dbReference type="eggNOG" id="KOG3689">
    <property type="taxonomic scope" value="Eukaryota"/>
</dbReference>
<dbReference type="GeneTree" id="ENSGT00940000155587"/>
<dbReference type="InParanoid" id="O70628"/>
<dbReference type="OMA" id="EKCHNDI"/>
<dbReference type="OrthoDB" id="546632at2759"/>
<dbReference type="PhylomeDB" id="O70628"/>
<dbReference type="TreeFam" id="TF314638"/>
<dbReference type="BRENDA" id="3.1.4.35">
    <property type="organism ID" value="3474"/>
</dbReference>
<dbReference type="Reactome" id="R-MMU-418457">
    <property type="pathway name" value="cGMP effects"/>
</dbReference>
<dbReference type="SABIO-RK" id="O70628"/>
<dbReference type="UniPathway" id="UPA00763">
    <property type="reaction ID" value="UER00748"/>
</dbReference>
<dbReference type="BioGRID-ORCS" id="18585">
    <property type="hits" value="1 hit in 78 CRISPR screens"/>
</dbReference>
<dbReference type="ChiTaRS" id="Pde9a">
    <property type="organism name" value="mouse"/>
</dbReference>
<dbReference type="PRO" id="PR:O70628"/>
<dbReference type="Proteomes" id="UP000000589">
    <property type="component" value="Chromosome 17"/>
</dbReference>
<dbReference type="RNAct" id="O70628">
    <property type="molecule type" value="protein"/>
</dbReference>
<dbReference type="Bgee" id="ENSMUSG00000041119">
    <property type="expression patterns" value="Expressed in cortical plate and 227 other cell types or tissues"/>
</dbReference>
<dbReference type="ExpressionAtlas" id="O70628">
    <property type="expression patterns" value="baseline and differential"/>
</dbReference>
<dbReference type="GO" id="GO:0005829">
    <property type="term" value="C:cytosol"/>
    <property type="evidence" value="ECO:0007669"/>
    <property type="project" value="Ensembl"/>
</dbReference>
<dbReference type="GO" id="GO:0005783">
    <property type="term" value="C:endoplasmic reticulum"/>
    <property type="evidence" value="ECO:0007669"/>
    <property type="project" value="UniProtKB-SubCell"/>
</dbReference>
<dbReference type="GO" id="GO:0005794">
    <property type="term" value="C:Golgi apparatus"/>
    <property type="evidence" value="ECO:0007669"/>
    <property type="project" value="UniProtKB-SubCell"/>
</dbReference>
<dbReference type="GO" id="GO:0005654">
    <property type="term" value="C:nucleoplasm"/>
    <property type="evidence" value="ECO:0007669"/>
    <property type="project" value="Ensembl"/>
</dbReference>
<dbReference type="GO" id="GO:0043204">
    <property type="term" value="C:perikaryon"/>
    <property type="evidence" value="ECO:0007669"/>
    <property type="project" value="Ensembl"/>
</dbReference>
<dbReference type="GO" id="GO:0048471">
    <property type="term" value="C:perinuclear region of cytoplasm"/>
    <property type="evidence" value="ECO:0007669"/>
    <property type="project" value="UniProtKB-SubCell"/>
</dbReference>
<dbReference type="GO" id="GO:0032587">
    <property type="term" value="C:ruffle membrane"/>
    <property type="evidence" value="ECO:0007669"/>
    <property type="project" value="UniProtKB-SubCell"/>
</dbReference>
<dbReference type="GO" id="GO:0042383">
    <property type="term" value="C:sarcolemma"/>
    <property type="evidence" value="ECO:0000250"/>
    <property type="project" value="UniProtKB"/>
</dbReference>
<dbReference type="GO" id="GO:0047555">
    <property type="term" value="F:3',5'-cyclic-GMP phosphodiesterase activity"/>
    <property type="evidence" value="ECO:0000314"/>
    <property type="project" value="MGI"/>
</dbReference>
<dbReference type="GO" id="GO:0046872">
    <property type="term" value="F:metal ion binding"/>
    <property type="evidence" value="ECO:0007669"/>
    <property type="project" value="UniProtKB-KW"/>
</dbReference>
<dbReference type="GO" id="GO:0046069">
    <property type="term" value="P:cGMP catabolic process"/>
    <property type="evidence" value="ECO:0000314"/>
    <property type="project" value="UniProtKB"/>
</dbReference>
<dbReference type="GO" id="GO:2000178">
    <property type="term" value="P:negative regulation of neural precursor cell proliferation"/>
    <property type="evidence" value="ECO:0007669"/>
    <property type="project" value="Ensembl"/>
</dbReference>
<dbReference type="GO" id="GO:0010613">
    <property type="term" value="P:positive regulation of cardiac muscle hypertrophy"/>
    <property type="evidence" value="ECO:0000315"/>
    <property type="project" value="UniProtKB"/>
</dbReference>
<dbReference type="GO" id="GO:1900273">
    <property type="term" value="P:positive regulation of long-term synaptic potentiation"/>
    <property type="evidence" value="ECO:0007669"/>
    <property type="project" value="Ensembl"/>
</dbReference>
<dbReference type="GO" id="GO:0007165">
    <property type="term" value="P:signal transduction"/>
    <property type="evidence" value="ECO:0007669"/>
    <property type="project" value="InterPro"/>
</dbReference>
<dbReference type="CDD" id="cd00077">
    <property type="entry name" value="HDc"/>
    <property type="match status" value="1"/>
</dbReference>
<dbReference type="FunFam" id="1.10.1300.10:FF:000006">
    <property type="entry name" value="Phosphodiesterase 9A"/>
    <property type="match status" value="1"/>
</dbReference>
<dbReference type="Gene3D" id="1.10.1300.10">
    <property type="entry name" value="3'5'-cyclic nucleotide phosphodiesterase, catalytic domain"/>
    <property type="match status" value="1"/>
</dbReference>
<dbReference type="InterPro" id="IPR003607">
    <property type="entry name" value="HD/PDEase_dom"/>
</dbReference>
<dbReference type="InterPro" id="IPR023088">
    <property type="entry name" value="PDEase"/>
</dbReference>
<dbReference type="InterPro" id="IPR002073">
    <property type="entry name" value="PDEase_catalytic_dom"/>
</dbReference>
<dbReference type="InterPro" id="IPR036971">
    <property type="entry name" value="PDEase_catalytic_dom_sf"/>
</dbReference>
<dbReference type="InterPro" id="IPR023174">
    <property type="entry name" value="PDEase_CS"/>
</dbReference>
<dbReference type="PANTHER" id="PTHR11347">
    <property type="entry name" value="CYCLIC NUCLEOTIDE PHOSPHODIESTERASE"/>
    <property type="match status" value="1"/>
</dbReference>
<dbReference type="Pfam" id="PF00233">
    <property type="entry name" value="PDEase_I"/>
    <property type="match status" value="1"/>
</dbReference>
<dbReference type="PRINTS" id="PR00387">
    <property type="entry name" value="PDIESTERASE1"/>
</dbReference>
<dbReference type="SMART" id="SM00471">
    <property type="entry name" value="HDc"/>
    <property type="match status" value="1"/>
</dbReference>
<dbReference type="SUPFAM" id="SSF109604">
    <property type="entry name" value="HD-domain/PDEase-like"/>
    <property type="match status" value="1"/>
</dbReference>
<dbReference type="PROSITE" id="PS00126">
    <property type="entry name" value="PDEASE_I_1"/>
    <property type="match status" value="1"/>
</dbReference>
<dbReference type="PROSITE" id="PS51845">
    <property type="entry name" value="PDEASE_I_2"/>
    <property type="match status" value="1"/>
</dbReference>
<name>PDE9A_MOUSE</name>
<organism>
    <name type="scientific">Mus musculus</name>
    <name type="common">Mouse</name>
    <dbReference type="NCBI Taxonomy" id="10090"/>
    <lineage>
        <taxon>Eukaryota</taxon>
        <taxon>Metazoa</taxon>
        <taxon>Chordata</taxon>
        <taxon>Craniata</taxon>
        <taxon>Vertebrata</taxon>
        <taxon>Euteleostomi</taxon>
        <taxon>Mammalia</taxon>
        <taxon>Eutheria</taxon>
        <taxon>Euarchontoglires</taxon>
        <taxon>Glires</taxon>
        <taxon>Rodentia</taxon>
        <taxon>Myomorpha</taxon>
        <taxon>Muroidea</taxon>
        <taxon>Muridae</taxon>
        <taxon>Murinae</taxon>
        <taxon>Mus</taxon>
        <taxon>Mus</taxon>
    </lineage>
</organism>
<sequence>MGAGSSSYRPKAIYLDIDGRIQKVVFSKYCNSSDIMDLFCIATGLPRNTTISLLTTDDAMVSIDPTMPANSERTPYKVRPVAVKQVSEREELIQGVLAQVAEQFSRAFKINELKAEVANHLAVLEKRVELEGLKVVEIEKCKSDIKKMREELAARNSRTNCPCKYSFLDNKKLTPRRDVPTYPKYLLSPETIEALRKPTFDVWLWEPNEMLSCLEHMYHDLGLVRDFSINPITLRRWLLCVHDNYRNNPFHNFRHCFCVTQMMYSMVWLCGLQEKFSQMDILVLMTAAICHDLDHPGYNNTYQINARTELAVRYNDISPLENHHCAIAFQILARPECNIFASVPPEGFRQIRQGMITLILATDMARHAEIMDSFKEKMENFDYSNEEHLTLLKMILIKCCDISNEVRPMEVAEPWVDCLLEEYFMQSDREKSEGLPVAPFMDRDKVTKATAQIGFIKFVLIPMFETVTKLFPVVEETMLRPLWESREHYEELKQLDDAMKELQKKTESLTSGAPENTTEKNRDAKDSEGHSPPN</sequence>
<gene>
    <name type="primary">Pde9a</name>
    <name type="synonym">Pde8b</name>
</gene>
<keyword id="KW-0025">Alternative splicing</keyword>
<keyword id="KW-1003">Cell membrane</keyword>
<keyword id="KW-0966">Cell projection</keyword>
<keyword id="KW-0140">cGMP</keyword>
<keyword id="KW-0963">Cytoplasm</keyword>
<keyword id="KW-0256">Endoplasmic reticulum</keyword>
<keyword id="KW-0333">Golgi apparatus</keyword>
<keyword id="KW-0378">Hydrolase</keyword>
<keyword id="KW-0460">Magnesium</keyword>
<keyword id="KW-0472">Membrane</keyword>
<keyword id="KW-0479">Metal-binding</keyword>
<keyword id="KW-0597">Phosphoprotein</keyword>
<keyword id="KW-1185">Reference proteome</keyword>
<keyword id="KW-0862">Zinc</keyword>
<accession>O70628</accession>
<reference key="1">
    <citation type="journal article" date="1998" name="J. Biol. Chem.">
        <title>Identification and characterization of a novel family of cyclic nucleotide phosphodiesterases.</title>
        <authorList>
            <person name="Soderling S.H."/>
            <person name="Bayuga S.J."/>
            <person name="Beavo J.A."/>
        </authorList>
    </citation>
    <scope>NUCLEOTIDE SEQUENCE [MRNA]</scope>
    <scope>FUNCTION</scope>
    <scope>CATALYTIC ACTIVITY</scope>
    <scope>ACTIVITY REGULATION</scope>
    <scope>TISSUE SPECIFICITY</scope>
</reference>
<reference key="2">
    <citation type="journal article" date="1998" name="Hum. Genet.">
        <title>Identification and characterization of a novel cyclic nucleotide phosphodiesterase gene (PDE9A) that maps to 21q22.3: alternative splicing of mRNA transcripts, genomic structure and sequence.</title>
        <authorList>
            <person name="Guipponi M."/>
            <person name="Scott H.S."/>
            <person name="Kudoh J."/>
            <person name="Kawasaki K."/>
            <person name="Shibuya K."/>
            <person name="Shintani A."/>
            <person name="Asakawa S."/>
            <person name="Chen H."/>
            <person name="Lalioti M.D."/>
            <person name="Rossier C."/>
            <person name="Minoshima S."/>
            <person name="Shimizu N."/>
            <person name="Antonarakis S.E."/>
        </authorList>
    </citation>
    <scope>NUCLEOTIDE SEQUENCE [MRNA]</scope>
</reference>
<reference key="3">
    <citation type="journal article" date="2004" name="Genome Res.">
        <title>The status, quality, and expansion of the NIH full-length cDNA project: the Mammalian Gene Collection (MGC).</title>
        <authorList>
            <consortium name="The MGC Project Team"/>
        </authorList>
    </citation>
    <scope>NUCLEOTIDE SEQUENCE [LARGE SCALE MRNA] (ISOFORM 1)</scope>
    <source>
        <tissue>Brain</tissue>
    </source>
</reference>
<reference key="4">
    <citation type="journal article" date="2002" name="J. Neurocytol.">
        <title>Cloning and localization of the cGMP-specific phosphodiesterase type 9 in the rat brain.</title>
        <authorList>
            <person name="van Staveren W.C."/>
            <person name="Glick J."/>
            <person name="Markerink-van Ittersum M."/>
            <person name="Shimizu M."/>
            <person name="Beavo J.A."/>
            <person name="Steinbusch H.W."/>
            <person name="de Vente J."/>
        </authorList>
    </citation>
    <scope>TISSUE SPECIFICITY</scope>
</reference>
<reference key="5">
    <citation type="journal article" date="2012" name="J. Pharmacol. Exp. Ther.">
        <title>Phosphodiesterase 9A regulates central cGMP and modulates responses to cholinergic and monoaminergic perturbation in vivo.</title>
        <authorList>
            <person name="Kleiman R.J."/>
            <person name="Chapin D.S."/>
            <person name="Christoffersen C."/>
            <person name="Freeman J."/>
            <person name="Fonseca K.R."/>
            <person name="Geoghegan K.F."/>
            <person name="Grimwood S."/>
            <person name="Guanowsky V."/>
            <person name="Hajos M."/>
            <person name="Harms J.F."/>
            <person name="Helal C.J."/>
            <person name="Hoffmann W.E."/>
            <person name="Kocan G.P."/>
            <person name="Majchrzak M.J."/>
            <person name="McGinnis D."/>
            <person name="McLean S."/>
            <person name="Menniti F.S."/>
            <person name="Nelson F."/>
            <person name="Roof R."/>
            <person name="Schmidt A.W."/>
            <person name="Seymour P.A."/>
            <person name="Stephenson D.T."/>
            <person name="Tingley F.D."/>
            <person name="Vanase-Frawley M."/>
            <person name="Verhoest P.R."/>
            <person name="Schmidt C.J."/>
        </authorList>
    </citation>
    <scope>FUNCTION</scope>
    <scope>ACTIVITY REGULATION</scope>
</reference>
<reference key="6">
    <citation type="journal article" date="2014" name="Neurobiol. Aging">
        <title>PDE9A inhibition rescues amyloid beta-induced deficits in synaptic plasticity and cognition.</title>
        <authorList>
            <person name="Kroker K.S."/>
            <person name="Mathis C."/>
            <person name="Marti A."/>
            <person name="Cassel J.C."/>
            <person name="Rosenbrock H."/>
            <person name="Dorner-Ciossek C."/>
        </authorList>
    </citation>
    <scope>FUNCTION</scope>
</reference>
<reference key="7">
    <citation type="journal article" date="2015" name="Nature">
        <title>Phosphodiesterase 9A controls nitric-oxide-independent cGMP and hypertrophic heart disease.</title>
        <authorList>
            <person name="Lee D.I."/>
            <person name="Zhu G."/>
            <person name="Sasaki T."/>
            <person name="Cho G.S."/>
            <person name="Hamdani N."/>
            <person name="Holewinski R."/>
            <person name="Jo S.H."/>
            <person name="Danner T."/>
            <person name="Zhang M."/>
            <person name="Rainer P.P."/>
            <person name="Bedja D."/>
            <person name="Kirk J.A."/>
            <person name="Ranek M.J."/>
            <person name="Dostmann W.R."/>
            <person name="Kwon C."/>
            <person name="Margulies K.B."/>
            <person name="Van Eyk J.E."/>
            <person name="Paulus W.J."/>
            <person name="Takimoto E."/>
            <person name="Kass D.A."/>
        </authorList>
    </citation>
    <scope>FUNCTION</scope>
    <scope>TISSUE SPECIFICITY</scope>
    <scope>DISRUPTION PHENOTYPE</scope>
</reference>
<evidence type="ECO:0000250" key="1">
    <source>
        <dbReference type="UniProtKB" id="O76083"/>
    </source>
</evidence>
<evidence type="ECO:0000250" key="2">
    <source>
        <dbReference type="UniProtKB" id="Q8QZV1"/>
    </source>
</evidence>
<evidence type="ECO:0000255" key="3">
    <source>
        <dbReference type="PROSITE-ProRule" id="PRU01192"/>
    </source>
</evidence>
<evidence type="ECO:0000256" key="4">
    <source>
        <dbReference type="SAM" id="MobiDB-lite"/>
    </source>
</evidence>
<evidence type="ECO:0000269" key="5">
    <source>
    </source>
</evidence>
<evidence type="ECO:0000269" key="6">
    <source>
    </source>
</evidence>
<evidence type="ECO:0000269" key="7">
    <source>
    </source>
</evidence>
<evidence type="ECO:0000269" key="8">
    <source>
    </source>
</evidence>
<evidence type="ECO:0000269" key="9">
    <source>
    </source>
</evidence>
<evidence type="ECO:0000305" key="10"/>
<comment type="function">
    <text evidence="6 7 8 9 10">Specifically hydrolyzes the second messenger cGMP, which is a key regulator of many important physiological processes (PubMed:9624145). Highly specific: compared to other members of the cyclic nucleotide phosphodiesterase family, has the highest affinity and selectivity for cGMP. Specifically regulates natriuretic-peptide-dependent cGMP signaling in heart, acting as a regulator of cardiac hypertrophy in myocytes and muscle. Does not regulate nitric oxide-dependent cGMP in heart (PubMed:25799991). Additional experiments are required to confirm whether its ability to hydrolyze natriuretic-peptide-dependent cGMP is specific to heart or is a general feature of the protein (Probable). In brain, involved in cognitive function, such as learning and long-term memory (PubMed:22328573, PubMed:24746365).</text>
</comment>
<comment type="catalytic activity">
    <reaction evidence="9">
        <text>3',5'-cyclic GMP + H2O = GMP + H(+)</text>
        <dbReference type="Rhea" id="RHEA:16957"/>
        <dbReference type="ChEBI" id="CHEBI:15377"/>
        <dbReference type="ChEBI" id="CHEBI:15378"/>
        <dbReference type="ChEBI" id="CHEBI:57746"/>
        <dbReference type="ChEBI" id="CHEBI:58115"/>
        <dbReference type="EC" id="3.1.4.35"/>
    </reaction>
</comment>
<comment type="cofactor">
    <cofactor evidence="1">
        <name>Zn(2+)</name>
        <dbReference type="ChEBI" id="CHEBI:29105"/>
    </cofactor>
    <text evidence="1">Binds 1 Zn(2+) ion per subunit. Binds 2 divalent metal cations per subunit: site 1 preferentially binds zinc, while site 2 has a preference for magnesium. Tightly binds zinc.</text>
</comment>
<comment type="cofactor">
    <cofactor evidence="1">
        <name>Mg(2+)</name>
        <dbReference type="ChEBI" id="CHEBI:18420"/>
    </cofactor>
    <text evidence="1">Binds 1 Mg(2+) ions per subunit. Binds 2 divalent metal cations per subunit: site 1 preferentially binds zinc, while site 2 has a preference for magnesium. Binds magnesium less tightly than zinc.</text>
</comment>
<comment type="activity regulation">
    <text evidence="6 9">Inhibited by SCH 51866 and moderately, by zaprinast. Specifically inhibited by PF-04447943 (6-[(3S,4S)-4-methyl-1-(pyrimidin-2-ylmethyl)pyrrolidin-3-yl]-1-(tetrahydro-2H-pyran-4-yl)-1,5-dihydro-4H-pyrazolo[3,4-d]pyrimidin-4-one) (PubMed:22328573).</text>
</comment>
<comment type="biophysicochemical properties">
    <kinetics>
        <KM evidence="9">0.07 mM for cGMP</KM>
    </kinetics>
</comment>
<comment type="pathway">
    <text>Purine metabolism; 3',5'-cyclic GMP degradation; GMP from 3',5'-cyclic GMP: step 1/1.</text>
</comment>
<comment type="subunit">
    <text evidence="1">Homodimer.</text>
</comment>
<comment type="subcellular location">
    <subcellularLocation>
        <location evidence="1">Cell projection</location>
        <location evidence="1">Ruffle membrane</location>
    </subcellularLocation>
    <subcellularLocation>
        <location evidence="1">Cytoplasm</location>
        <location evidence="1">Perinuclear region</location>
    </subcellularLocation>
    <subcellularLocation>
        <location evidence="1">Golgi apparatus</location>
    </subcellularLocation>
    <subcellularLocation>
        <location evidence="1">Endoplasmic reticulum</location>
    </subcellularLocation>
    <subcellularLocation>
        <location evidence="1">Cell membrane</location>
        <location evidence="1">Sarcolemma</location>
    </subcellularLocation>
</comment>
<comment type="alternative products">
    <event type="alternative splicing"/>
    <isoform>
        <id>O70628-1</id>
        <name>1</name>
        <sequence type="displayed"/>
    </isoform>
    <text>A number of isoforms are produced.</text>
</comment>
<comment type="tissue specificity">
    <text evidence="5 8 9">Highly expressed in kidney. Lower levels in liver, lung and brain (PubMed:9624145). Widely expressed in brain, with highest expression in cerebellar Purkinje cells (PubMed:14501210). Present in heart (at protein level) (PubMed:25799991).</text>
</comment>
<comment type="disruption phenotype">
    <text evidence="8">Mice hearts develop less dilation and dysfunction when exposed to sustained pressure overload.</text>
</comment>
<comment type="similarity">
    <text evidence="10">Belongs to the cyclic nucleotide phosphodiesterase family. PDE9 subfamily.</text>
</comment>
<protein>
    <recommendedName>
        <fullName evidence="10">High affinity cGMP-specific 3',5'-cyclic phosphodiesterase 9A</fullName>
        <ecNumber evidence="9">3.1.4.35</ecNumber>
    </recommendedName>
</protein>
<proteinExistence type="evidence at protein level"/>
<feature type="chain" id="PRO_0000198842" description="High affinity cGMP-specific 3',5'-cyclic phosphodiesterase 9A">
    <location>
        <begin position="1"/>
        <end position="534"/>
    </location>
</feature>
<feature type="domain" description="PDEase" evidence="3">
    <location>
        <begin position="175"/>
        <end position="496"/>
    </location>
</feature>
<feature type="region of interest" description="Disordered" evidence="4">
    <location>
        <begin position="500"/>
        <end position="534"/>
    </location>
</feature>
<feature type="compositionally biased region" description="Basic and acidic residues" evidence="4">
    <location>
        <begin position="517"/>
        <end position="534"/>
    </location>
</feature>
<feature type="active site" description="Proton donor" evidence="1">
    <location>
        <position position="251"/>
    </location>
</feature>
<feature type="binding site" evidence="1">
    <location>
        <begin position="251"/>
        <end position="255"/>
    </location>
    <ligand>
        <name>3',5'-cyclic GMP</name>
        <dbReference type="ChEBI" id="CHEBI:57746"/>
    </ligand>
</feature>
<feature type="binding site" evidence="1">
    <location>
        <position position="255"/>
    </location>
    <ligand>
        <name>Zn(2+)</name>
        <dbReference type="ChEBI" id="CHEBI:29105"/>
    </ligand>
</feature>
<feature type="binding site" evidence="1">
    <location>
        <position position="291"/>
    </location>
    <ligand>
        <name>Zn(2+)</name>
        <dbReference type="ChEBI" id="CHEBI:29105"/>
    </ligand>
</feature>
<feature type="binding site" evidence="1">
    <location>
        <position position="292"/>
    </location>
    <ligand>
        <name>3',5'-cyclic GMP</name>
        <dbReference type="ChEBI" id="CHEBI:57746"/>
    </ligand>
</feature>
<feature type="binding site" evidence="1">
    <location>
        <position position="292"/>
    </location>
    <ligand>
        <name>Mg(2+)</name>
        <dbReference type="ChEBI" id="CHEBI:18420"/>
    </ligand>
</feature>
<feature type="binding site" evidence="1">
    <location>
        <position position="292"/>
    </location>
    <ligand>
        <name>Zn(2+)</name>
        <dbReference type="ChEBI" id="CHEBI:29105"/>
    </ligand>
</feature>
<feature type="binding site" evidence="1">
    <location>
        <position position="401"/>
    </location>
    <ligand>
        <name>3',5'-cyclic GMP</name>
        <dbReference type="ChEBI" id="CHEBI:57746"/>
    </ligand>
</feature>
<feature type="binding site" evidence="1">
    <location>
        <position position="401"/>
    </location>
    <ligand>
        <name>Zn(2+)</name>
        <dbReference type="ChEBI" id="CHEBI:29105"/>
    </ligand>
</feature>
<feature type="binding site" evidence="1">
    <location>
        <position position="423"/>
    </location>
    <ligand>
        <name>3',5'-cyclic GMP</name>
        <dbReference type="ChEBI" id="CHEBI:57746"/>
    </ligand>
</feature>
<feature type="binding site" evidence="1">
    <location>
        <begin position="451"/>
        <end position="452"/>
    </location>
    <ligand>
        <name>3',5'-cyclic GMP</name>
        <dbReference type="ChEBI" id="CHEBI:57746"/>
    </ligand>
</feature>
<feature type="modified residue" description="Phosphoserine" evidence="2">
    <location>
        <position position="318"/>
    </location>
</feature>